<reference key="1">
    <citation type="journal article" date="2009" name="J. Bacteriol.">
        <title>Genomic sequencing reveals regulatory mutations and recombinational events in the widely used MC4100 lineage of Escherichia coli K-12.</title>
        <authorList>
            <person name="Ferenci T."/>
            <person name="Zhou Z."/>
            <person name="Betteridge T."/>
            <person name="Ren Y."/>
            <person name="Liu Y."/>
            <person name="Feng L."/>
            <person name="Reeves P.R."/>
            <person name="Wang L."/>
        </authorList>
    </citation>
    <scope>NUCLEOTIDE SEQUENCE [LARGE SCALE GENOMIC DNA]</scope>
    <source>
        <strain>K12 / MC4100 / BW2952</strain>
    </source>
</reference>
<feature type="chain" id="PRO_1000206081" description="Ketol-acid reductoisomerase (NADP(+))">
    <location>
        <begin position="1"/>
        <end position="491"/>
    </location>
</feature>
<feature type="domain" description="KARI N-terminal Rossmann" evidence="2">
    <location>
        <begin position="15"/>
        <end position="208"/>
    </location>
</feature>
<feature type="domain" description="KARI C-terminal knotted 1" evidence="3">
    <location>
        <begin position="209"/>
        <end position="344"/>
    </location>
</feature>
<feature type="domain" description="KARI C-terminal knotted 2" evidence="3">
    <location>
        <begin position="345"/>
        <end position="484"/>
    </location>
</feature>
<feature type="active site" evidence="1">
    <location>
        <position position="132"/>
    </location>
</feature>
<feature type="binding site" evidence="1">
    <location>
        <begin position="45"/>
        <end position="48"/>
    </location>
    <ligand>
        <name>NADP(+)</name>
        <dbReference type="ChEBI" id="CHEBI:58349"/>
    </ligand>
</feature>
<feature type="binding site" evidence="1">
    <location>
        <position position="68"/>
    </location>
    <ligand>
        <name>NADP(+)</name>
        <dbReference type="ChEBI" id="CHEBI:58349"/>
    </ligand>
</feature>
<feature type="binding site" evidence="1">
    <location>
        <position position="76"/>
    </location>
    <ligand>
        <name>NADP(+)</name>
        <dbReference type="ChEBI" id="CHEBI:58349"/>
    </ligand>
</feature>
<feature type="binding site" evidence="1">
    <location>
        <position position="78"/>
    </location>
    <ligand>
        <name>NADP(+)</name>
        <dbReference type="ChEBI" id="CHEBI:58349"/>
    </ligand>
</feature>
<feature type="binding site" evidence="1">
    <location>
        <begin position="108"/>
        <end position="110"/>
    </location>
    <ligand>
        <name>NADP(+)</name>
        <dbReference type="ChEBI" id="CHEBI:58349"/>
    </ligand>
</feature>
<feature type="binding site" evidence="1">
    <location>
        <position position="158"/>
    </location>
    <ligand>
        <name>NADP(+)</name>
        <dbReference type="ChEBI" id="CHEBI:58349"/>
    </ligand>
</feature>
<feature type="binding site" evidence="1">
    <location>
        <position position="217"/>
    </location>
    <ligand>
        <name>Mg(2+)</name>
        <dbReference type="ChEBI" id="CHEBI:18420"/>
        <label>1</label>
    </ligand>
</feature>
<feature type="binding site" evidence="1">
    <location>
        <position position="217"/>
    </location>
    <ligand>
        <name>Mg(2+)</name>
        <dbReference type="ChEBI" id="CHEBI:18420"/>
        <label>2</label>
    </ligand>
</feature>
<feature type="binding site" evidence="1">
    <location>
        <position position="221"/>
    </location>
    <ligand>
        <name>Mg(2+)</name>
        <dbReference type="ChEBI" id="CHEBI:18420"/>
        <label>1</label>
    </ligand>
</feature>
<feature type="binding site" evidence="1">
    <location>
        <position position="389"/>
    </location>
    <ligand>
        <name>Mg(2+)</name>
        <dbReference type="ChEBI" id="CHEBI:18420"/>
        <label>2</label>
    </ligand>
</feature>
<feature type="binding site" evidence="1">
    <location>
        <position position="393"/>
    </location>
    <ligand>
        <name>Mg(2+)</name>
        <dbReference type="ChEBI" id="CHEBI:18420"/>
        <label>2</label>
    </ligand>
</feature>
<feature type="binding site" evidence="1">
    <location>
        <position position="414"/>
    </location>
    <ligand>
        <name>substrate</name>
    </ligand>
</feature>
<dbReference type="EC" id="1.1.1.86" evidence="1"/>
<dbReference type="EMBL" id="CP001396">
    <property type="protein sequence ID" value="ACR63569.1"/>
    <property type="molecule type" value="Genomic_DNA"/>
</dbReference>
<dbReference type="RefSeq" id="WP_000024939.1">
    <property type="nucleotide sequence ID" value="NC_012759.1"/>
</dbReference>
<dbReference type="SMR" id="C4ZZ44"/>
<dbReference type="KEGG" id="ebw:BWG_3459"/>
<dbReference type="HOGENOM" id="CLU_551905_0_0_6"/>
<dbReference type="UniPathway" id="UPA00047">
    <property type="reaction ID" value="UER00056"/>
</dbReference>
<dbReference type="UniPathway" id="UPA00049">
    <property type="reaction ID" value="UER00060"/>
</dbReference>
<dbReference type="GO" id="GO:0005829">
    <property type="term" value="C:cytosol"/>
    <property type="evidence" value="ECO:0007669"/>
    <property type="project" value="TreeGrafter"/>
</dbReference>
<dbReference type="GO" id="GO:0004455">
    <property type="term" value="F:ketol-acid reductoisomerase activity"/>
    <property type="evidence" value="ECO:0007669"/>
    <property type="project" value="UniProtKB-UniRule"/>
</dbReference>
<dbReference type="GO" id="GO:0000287">
    <property type="term" value="F:magnesium ion binding"/>
    <property type="evidence" value="ECO:0007669"/>
    <property type="project" value="UniProtKB-UniRule"/>
</dbReference>
<dbReference type="GO" id="GO:0009097">
    <property type="term" value="P:isoleucine biosynthetic process"/>
    <property type="evidence" value="ECO:0007669"/>
    <property type="project" value="UniProtKB-UniRule"/>
</dbReference>
<dbReference type="GO" id="GO:0009099">
    <property type="term" value="P:L-valine biosynthetic process"/>
    <property type="evidence" value="ECO:0007669"/>
    <property type="project" value="UniProtKB-UniRule"/>
</dbReference>
<dbReference type="FunFam" id="1.10.1040.10:FF:000007">
    <property type="entry name" value="Ketol-acid reductoisomerase (NADP(+))"/>
    <property type="match status" value="1"/>
</dbReference>
<dbReference type="FunFam" id="3.40.50.720:FF:000043">
    <property type="entry name" value="Ketol-acid reductoisomerase (NADP(+))"/>
    <property type="match status" value="1"/>
</dbReference>
<dbReference type="Gene3D" id="1.10.1040.10">
    <property type="entry name" value="N-(1-d-carboxylethyl)-l-norvaline Dehydrogenase, domain 2"/>
    <property type="match status" value="1"/>
</dbReference>
<dbReference type="Gene3D" id="3.40.50.720">
    <property type="entry name" value="NAD(P)-binding Rossmann-like Domain"/>
    <property type="match status" value="1"/>
</dbReference>
<dbReference type="HAMAP" id="MF_00435">
    <property type="entry name" value="IlvC"/>
    <property type="match status" value="1"/>
</dbReference>
<dbReference type="InterPro" id="IPR008927">
    <property type="entry name" value="6-PGluconate_DH-like_C_sf"/>
</dbReference>
<dbReference type="InterPro" id="IPR013328">
    <property type="entry name" value="6PGD_dom2"/>
</dbReference>
<dbReference type="InterPro" id="IPR013023">
    <property type="entry name" value="KARI"/>
</dbReference>
<dbReference type="InterPro" id="IPR000506">
    <property type="entry name" value="KARI_C"/>
</dbReference>
<dbReference type="InterPro" id="IPR013116">
    <property type="entry name" value="KARI_N"/>
</dbReference>
<dbReference type="InterPro" id="IPR036291">
    <property type="entry name" value="NAD(P)-bd_dom_sf"/>
</dbReference>
<dbReference type="NCBIfam" id="TIGR00465">
    <property type="entry name" value="ilvC"/>
    <property type="match status" value="1"/>
</dbReference>
<dbReference type="NCBIfam" id="NF003557">
    <property type="entry name" value="PRK05225.1"/>
    <property type="match status" value="1"/>
</dbReference>
<dbReference type="PANTHER" id="PTHR21371">
    <property type="entry name" value="KETOL-ACID REDUCTOISOMERASE, MITOCHONDRIAL"/>
    <property type="match status" value="1"/>
</dbReference>
<dbReference type="PANTHER" id="PTHR21371:SF1">
    <property type="entry name" value="KETOL-ACID REDUCTOISOMERASE, MITOCHONDRIAL"/>
    <property type="match status" value="1"/>
</dbReference>
<dbReference type="Pfam" id="PF01450">
    <property type="entry name" value="KARI_C"/>
    <property type="match status" value="2"/>
</dbReference>
<dbReference type="Pfam" id="PF07991">
    <property type="entry name" value="KARI_N"/>
    <property type="match status" value="1"/>
</dbReference>
<dbReference type="SUPFAM" id="SSF48179">
    <property type="entry name" value="6-phosphogluconate dehydrogenase C-terminal domain-like"/>
    <property type="match status" value="2"/>
</dbReference>
<dbReference type="SUPFAM" id="SSF51735">
    <property type="entry name" value="NAD(P)-binding Rossmann-fold domains"/>
    <property type="match status" value="1"/>
</dbReference>
<dbReference type="PROSITE" id="PS51851">
    <property type="entry name" value="KARI_C"/>
    <property type="match status" value="2"/>
</dbReference>
<dbReference type="PROSITE" id="PS51850">
    <property type="entry name" value="KARI_N"/>
    <property type="match status" value="1"/>
</dbReference>
<keyword id="KW-0028">Amino-acid biosynthesis</keyword>
<keyword id="KW-0100">Branched-chain amino acid biosynthesis</keyword>
<keyword id="KW-0460">Magnesium</keyword>
<keyword id="KW-0479">Metal-binding</keyword>
<keyword id="KW-0521">NADP</keyword>
<keyword id="KW-0560">Oxidoreductase</keyword>
<keyword id="KW-0677">Repeat</keyword>
<organism>
    <name type="scientific">Escherichia coli (strain K12 / MC4100 / BW2952)</name>
    <dbReference type="NCBI Taxonomy" id="595496"/>
    <lineage>
        <taxon>Bacteria</taxon>
        <taxon>Pseudomonadati</taxon>
        <taxon>Pseudomonadota</taxon>
        <taxon>Gammaproteobacteria</taxon>
        <taxon>Enterobacterales</taxon>
        <taxon>Enterobacteriaceae</taxon>
        <taxon>Escherichia</taxon>
    </lineage>
</organism>
<protein>
    <recommendedName>
        <fullName evidence="1">Ketol-acid reductoisomerase (NADP(+))</fullName>
        <shortName evidence="1">KARI</shortName>
        <ecNumber evidence="1">1.1.1.86</ecNumber>
    </recommendedName>
    <alternativeName>
        <fullName evidence="1">Acetohydroxy-acid isomeroreductase</fullName>
        <shortName evidence="1">AHIR</shortName>
    </alternativeName>
    <alternativeName>
        <fullName evidence="1">Alpha-keto-beta-hydroxylacyl reductoisomerase</fullName>
    </alternativeName>
    <alternativeName>
        <fullName evidence="1">Ketol-acid reductoisomerase type 2</fullName>
    </alternativeName>
    <alternativeName>
        <fullName evidence="1">Ketol-acid reductoisomerase type II</fullName>
    </alternativeName>
</protein>
<proteinExistence type="inferred from homology"/>
<comment type="function">
    <text evidence="1">Involved in the biosynthesis of branched-chain amino acids (BCAA). Catalyzes an alkyl-migration followed by a ketol-acid reduction of (S)-2-acetolactate (S2AL) to yield (R)-2,3-dihydroxy-isovalerate. In the isomerase reaction, S2AL is rearranged via a Mg-dependent methyl migration to produce 3-hydroxy-3-methyl-2-ketobutyrate (HMKB). In the reductase reaction, this 2-ketoacid undergoes a metal-dependent reduction by NADPH to yield (R)-2,3-dihydroxy-isovalerate.</text>
</comment>
<comment type="catalytic activity">
    <reaction evidence="1">
        <text>(2R)-2,3-dihydroxy-3-methylbutanoate + NADP(+) = (2S)-2-acetolactate + NADPH + H(+)</text>
        <dbReference type="Rhea" id="RHEA:22068"/>
        <dbReference type="ChEBI" id="CHEBI:15378"/>
        <dbReference type="ChEBI" id="CHEBI:49072"/>
        <dbReference type="ChEBI" id="CHEBI:57783"/>
        <dbReference type="ChEBI" id="CHEBI:58349"/>
        <dbReference type="ChEBI" id="CHEBI:58476"/>
        <dbReference type="EC" id="1.1.1.86"/>
    </reaction>
</comment>
<comment type="catalytic activity">
    <reaction evidence="1">
        <text>(2R,3R)-2,3-dihydroxy-3-methylpentanoate + NADP(+) = (S)-2-ethyl-2-hydroxy-3-oxobutanoate + NADPH + H(+)</text>
        <dbReference type="Rhea" id="RHEA:13493"/>
        <dbReference type="ChEBI" id="CHEBI:15378"/>
        <dbReference type="ChEBI" id="CHEBI:49256"/>
        <dbReference type="ChEBI" id="CHEBI:49258"/>
        <dbReference type="ChEBI" id="CHEBI:57783"/>
        <dbReference type="ChEBI" id="CHEBI:58349"/>
        <dbReference type="EC" id="1.1.1.86"/>
    </reaction>
</comment>
<comment type="cofactor">
    <cofactor evidence="1">
        <name>Mg(2+)</name>
        <dbReference type="ChEBI" id="CHEBI:18420"/>
    </cofactor>
    <text evidence="1">Binds 2 magnesium ions per subunit.</text>
</comment>
<comment type="pathway">
    <text evidence="1">Amino-acid biosynthesis; L-isoleucine biosynthesis; L-isoleucine from 2-oxobutanoate: step 2/4.</text>
</comment>
<comment type="pathway">
    <text evidence="1">Amino-acid biosynthesis; L-valine biosynthesis; L-valine from pyruvate: step 2/4.</text>
</comment>
<comment type="similarity">
    <text evidence="1">Belongs to the ketol-acid reductoisomerase family.</text>
</comment>
<accession>C4ZZ44</accession>
<evidence type="ECO:0000255" key="1">
    <source>
        <dbReference type="HAMAP-Rule" id="MF_00435"/>
    </source>
</evidence>
<evidence type="ECO:0000255" key="2">
    <source>
        <dbReference type="PROSITE-ProRule" id="PRU01197"/>
    </source>
</evidence>
<evidence type="ECO:0000255" key="3">
    <source>
        <dbReference type="PROSITE-ProRule" id="PRU01198"/>
    </source>
</evidence>
<gene>
    <name evidence="1" type="primary">ilvC</name>
    <name type="ordered locus">BWG_3459</name>
</gene>
<sequence>MANYFNTLNLRQQLAQLGKCRFMGRDEFADGASYLQGKKVVIVGCGAQGLNQGLNMRDSGLDISYALRKEAIAEKRASWRKATENGFKVGTYEELIPQADLVINLTPDKQHSDVVRTVQPLMKDGAALGYSHGFNIVEVGEQIRKDITVVMVAPKCPGTEVREEYKRGFGVPTLIAVHPENDPKGEGMAIAKAWAAATGGHRAGVLESSFVAEVKSDLMGEQTILCGMLQAGSLLCFDKLVEEGTDPAYAEKLIQFGWETITEALKQGGITLMMDRLSNPAKLRAYALSEQLKEIMAPLFQKHMDDIISGEFSSGMMADWANDDKKLLTWREETGKTAFETAPQYEGKIGEQEYFDKGVLMIAMVKAGVELAFETMVDSGIIEESAYYESLHELPLIANTIARKRLYEMNVVISDTAEYGNYLFSYACVPLLKPFMAELQPGDLGKAIPEGAVDNGQLRDVNEAIRSHAIEQVGKKLRGYMTDMKRIAVAG</sequence>
<name>ILVC_ECOBW</name>